<proteinExistence type="inferred from homology"/>
<dbReference type="EC" id="2.7.7.89" evidence="1"/>
<dbReference type="EC" id="2.7.7.42" evidence="1"/>
<dbReference type="EMBL" id="CP000026">
    <property type="protein sequence ID" value="AAV78904.1"/>
    <property type="molecule type" value="Genomic_DNA"/>
</dbReference>
<dbReference type="RefSeq" id="WP_000188290.1">
    <property type="nucleotide sequence ID" value="NC_006511.1"/>
</dbReference>
<dbReference type="SMR" id="Q5PC85"/>
<dbReference type="KEGG" id="spt:SPA3069"/>
<dbReference type="HOGENOM" id="CLU_006233_0_1_6"/>
<dbReference type="Proteomes" id="UP000008185">
    <property type="component" value="Chromosome"/>
</dbReference>
<dbReference type="GO" id="GO:0005829">
    <property type="term" value="C:cytosol"/>
    <property type="evidence" value="ECO:0007669"/>
    <property type="project" value="TreeGrafter"/>
</dbReference>
<dbReference type="GO" id="GO:0008882">
    <property type="term" value="F:[glutamate-ammonia-ligase] adenylyltransferase activity"/>
    <property type="evidence" value="ECO:0007669"/>
    <property type="project" value="UniProtKB-UniRule"/>
</dbReference>
<dbReference type="GO" id="GO:0047388">
    <property type="term" value="F:[glutamine synthetase]-adenylyl-L-tyrosine phosphorylase activity"/>
    <property type="evidence" value="ECO:0007669"/>
    <property type="project" value="UniProtKB-EC"/>
</dbReference>
<dbReference type="GO" id="GO:0005524">
    <property type="term" value="F:ATP binding"/>
    <property type="evidence" value="ECO:0007669"/>
    <property type="project" value="UniProtKB-UniRule"/>
</dbReference>
<dbReference type="GO" id="GO:0000287">
    <property type="term" value="F:magnesium ion binding"/>
    <property type="evidence" value="ECO:0007669"/>
    <property type="project" value="UniProtKB-UniRule"/>
</dbReference>
<dbReference type="GO" id="GO:0000820">
    <property type="term" value="P:regulation of glutamine family amino acid metabolic process"/>
    <property type="evidence" value="ECO:0007669"/>
    <property type="project" value="UniProtKB-UniRule"/>
</dbReference>
<dbReference type="CDD" id="cd05401">
    <property type="entry name" value="NT_GlnE_GlnD_like"/>
    <property type="match status" value="2"/>
</dbReference>
<dbReference type="FunFam" id="1.10.4050.10:FF:000001">
    <property type="entry name" value="Bifunctional glutamine synthetase adenylyltransferase/adenylyl-removing enzyme"/>
    <property type="match status" value="1"/>
</dbReference>
<dbReference type="FunFam" id="1.20.120.1510:FF:000001">
    <property type="entry name" value="Bifunctional glutamine synthetase adenylyltransferase/adenylyl-removing enzyme"/>
    <property type="match status" value="1"/>
</dbReference>
<dbReference type="FunFam" id="1.20.120.330:FF:000005">
    <property type="entry name" value="Bifunctional glutamine synthetase adenylyltransferase/adenylyl-removing enzyme"/>
    <property type="match status" value="1"/>
</dbReference>
<dbReference type="FunFam" id="1.20.120.330:FF:000008">
    <property type="entry name" value="Bifunctional glutamine synthetase adenylyltransferase/adenylyl-removing enzyme"/>
    <property type="match status" value="1"/>
</dbReference>
<dbReference type="FunFam" id="3.30.460.10:FF:000009">
    <property type="entry name" value="Bifunctional glutamine synthetase adenylyltransferase/adenylyl-removing enzyme"/>
    <property type="match status" value="1"/>
</dbReference>
<dbReference type="FunFam" id="3.30.460.10:FF:000014">
    <property type="entry name" value="Bifunctional glutamine synthetase adenylyltransferase/adenylyl-removing enzyme"/>
    <property type="match status" value="1"/>
</dbReference>
<dbReference type="Gene3D" id="1.20.120.1510">
    <property type="match status" value="1"/>
</dbReference>
<dbReference type="Gene3D" id="3.30.460.10">
    <property type="entry name" value="Beta Polymerase, domain 2"/>
    <property type="match status" value="2"/>
</dbReference>
<dbReference type="Gene3D" id="1.10.4050.10">
    <property type="entry name" value="Glutamine synthase adenylyltransferase GlnE"/>
    <property type="match status" value="1"/>
</dbReference>
<dbReference type="Gene3D" id="1.20.120.330">
    <property type="entry name" value="Nucleotidyltransferases domain 2"/>
    <property type="match status" value="2"/>
</dbReference>
<dbReference type="HAMAP" id="MF_00802">
    <property type="entry name" value="GlnE"/>
    <property type="match status" value="1"/>
</dbReference>
<dbReference type="InterPro" id="IPR023057">
    <property type="entry name" value="GlnE"/>
</dbReference>
<dbReference type="InterPro" id="IPR005190">
    <property type="entry name" value="GlnE_rpt_dom"/>
</dbReference>
<dbReference type="InterPro" id="IPR043519">
    <property type="entry name" value="NT_sf"/>
</dbReference>
<dbReference type="InterPro" id="IPR013546">
    <property type="entry name" value="PII_UdlTrfase/GS_AdlTrfase"/>
</dbReference>
<dbReference type="NCBIfam" id="NF008292">
    <property type="entry name" value="PRK11072.1"/>
    <property type="match status" value="1"/>
</dbReference>
<dbReference type="PANTHER" id="PTHR30621:SF0">
    <property type="entry name" value="BIFUNCTIONAL GLUTAMINE SYNTHETASE ADENYLYLTRANSFERASE_ADENYLYL-REMOVING ENZYME"/>
    <property type="match status" value="1"/>
</dbReference>
<dbReference type="PANTHER" id="PTHR30621">
    <property type="entry name" value="GLUTAMINE SYNTHETASE ADENYLYLTRANSFERASE"/>
    <property type="match status" value="1"/>
</dbReference>
<dbReference type="Pfam" id="PF08335">
    <property type="entry name" value="GlnD_UR_UTase"/>
    <property type="match status" value="2"/>
</dbReference>
<dbReference type="Pfam" id="PF03710">
    <property type="entry name" value="GlnE"/>
    <property type="match status" value="2"/>
</dbReference>
<dbReference type="SUPFAM" id="SSF81301">
    <property type="entry name" value="Nucleotidyltransferase"/>
    <property type="match status" value="2"/>
</dbReference>
<dbReference type="SUPFAM" id="SSF81593">
    <property type="entry name" value="Nucleotidyltransferase substrate binding subunit/domain"/>
    <property type="match status" value="2"/>
</dbReference>
<sequence>MTPLSSPLSQYCQTVVERLPEGFTETSLSAQAKSVLTFSDFALDSVIAHPEWLAELESASPQADEWRHYAGWLQEALAGVCDDASLMRELRLFRRRIMVRIAWAQTLSLVDDETILQQLSHLAETLIVGARDWLYAACCREWGTPCNPQGVPQPLLILGMGKLGGGELNFSSDIDLIFAWPEHGETRGGRRELDNAQFFTRLGQRLIKALDQPTMDGFVYRVDMRLRPFGDSGPLVLSFAALEDYYQEQGRDWERYAMVKARLMGDNDDAWSRELRAMLRPFVFRRYIDFSVIQSLRNMKGMIAREVRRRGLKDNIKLGAGGIREIEFIVQVFQLIRGGREPSLQSRSLLPTLDAIAALHLLPENDVAQLRMAYLFLRRLENLLQSINDEQTQTLPADDLNRARLAWGMKAENWPQLVGELTDHMANVRRVFNELIGDDEADTPQEEERSEPWREVWQDALQEDDSTPVLAHLADEDRRQVLTLIADFRKELDKRPIGPRGRQVLDQLMPHLLANVCSREDAAVTLSRITPLLAGIVTRTTYLELLSEFPGALKHLIMLCAASPMIASQLARYPLLLDELLDPGTLYQPTATDAYRDELRQYLLRVPEEDEEQQLEALRQFKQAQLLRIAAADIAGTLPVMKVSDHLTWLAEAMIDAVVQQAWTQMVARYGQPAHLDERQGRGFAVVGYGKLGGWELGYSSDLDLIFLHDCPMDVMTNGEREIDGRQFYLRLAQRIMHLFSTRTSSGILYEVDARLRPSGAAGMLVTSADAFADYQQHEAWTWEHQALVRARVVYGDPQLTSQFDAVRRTIMTTARDGKTLQTEVREMREKMRAHLGNKHRDRFDIKADEGGITDIEFIAQYLVLRYAHEKPKLTRWSDNVRILELLAQNGIMDEHEAQALTVAYTTLRDELHHLALQELPGHVAQTCFSKERALVQASWRKWLVAV</sequence>
<feature type="chain" id="PRO_0000209274" description="Bifunctional glutamine synthetase adenylyltransferase/adenylyl-removing enzyme">
    <location>
        <begin position="1"/>
        <end position="947"/>
    </location>
</feature>
<feature type="region of interest" description="Adenylyl removase" evidence="1">
    <location>
        <begin position="1"/>
        <end position="440"/>
    </location>
</feature>
<feature type="region of interest" description="Adenylyl transferase" evidence="1">
    <location>
        <begin position="450"/>
        <end position="947"/>
    </location>
</feature>
<protein>
    <recommendedName>
        <fullName evidence="1">Bifunctional glutamine synthetase adenylyltransferase/adenylyl-removing enzyme</fullName>
    </recommendedName>
    <alternativeName>
        <fullName evidence="1">ATP:glutamine synthetase adenylyltransferase</fullName>
    </alternativeName>
    <alternativeName>
        <fullName evidence="1">ATase</fullName>
    </alternativeName>
    <domain>
        <recommendedName>
            <fullName evidence="1">Glutamine synthetase adenylyl-L-tyrosine phosphorylase</fullName>
            <ecNumber evidence="1">2.7.7.89</ecNumber>
        </recommendedName>
        <alternativeName>
            <fullName evidence="1">Adenylyl removase</fullName>
            <shortName evidence="1">AR</shortName>
            <shortName evidence="1">AT-N</shortName>
        </alternativeName>
    </domain>
    <domain>
        <recommendedName>
            <fullName evidence="1">Glutamine synthetase adenylyl transferase</fullName>
            <ecNumber evidence="1">2.7.7.42</ecNumber>
        </recommendedName>
        <alternativeName>
            <fullName evidence="1">Adenylyl transferase</fullName>
            <shortName evidence="1">AT</shortName>
            <shortName evidence="1">AT-C</shortName>
        </alternativeName>
    </domain>
</protein>
<evidence type="ECO:0000255" key="1">
    <source>
        <dbReference type="HAMAP-Rule" id="MF_00802"/>
    </source>
</evidence>
<keyword id="KW-0067">ATP-binding</keyword>
<keyword id="KW-0460">Magnesium</keyword>
<keyword id="KW-0511">Multifunctional enzyme</keyword>
<keyword id="KW-0547">Nucleotide-binding</keyword>
<keyword id="KW-0548">Nucleotidyltransferase</keyword>
<keyword id="KW-0808">Transferase</keyword>
<reference key="1">
    <citation type="journal article" date="2004" name="Nat. Genet.">
        <title>Comparison of genome degradation in Paratyphi A and Typhi, human-restricted serovars of Salmonella enterica that cause typhoid.</title>
        <authorList>
            <person name="McClelland M."/>
            <person name="Sanderson K.E."/>
            <person name="Clifton S.W."/>
            <person name="Latreille P."/>
            <person name="Porwollik S."/>
            <person name="Sabo A."/>
            <person name="Meyer R."/>
            <person name="Bieri T."/>
            <person name="Ozersky P."/>
            <person name="McLellan M."/>
            <person name="Harkins C.R."/>
            <person name="Wang C."/>
            <person name="Nguyen C."/>
            <person name="Berghoff A."/>
            <person name="Elliott G."/>
            <person name="Kohlberg S."/>
            <person name="Strong C."/>
            <person name="Du F."/>
            <person name="Carter J."/>
            <person name="Kremizki C."/>
            <person name="Layman D."/>
            <person name="Leonard S."/>
            <person name="Sun H."/>
            <person name="Fulton L."/>
            <person name="Nash W."/>
            <person name="Miner T."/>
            <person name="Minx P."/>
            <person name="Delehaunty K."/>
            <person name="Fronick C."/>
            <person name="Magrini V."/>
            <person name="Nhan M."/>
            <person name="Warren W."/>
            <person name="Florea L."/>
            <person name="Spieth J."/>
            <person name="Wilson R.K."/>
        </authorList>
    </citation>
    <scope>NUCLEOTIDE SEQUENCE [LARGE SCALE GENOMIC DNA]</scope>
    <source>
        <strain>ATCC 9150 / SARB42</strain>
    </source>
</reference>
<accession>Q5PC85</accession>
<comment type="function">
    <text evidence="1">Involved in the regulation of glutamine synthetase GlnA, a key enzyme in the process to assimilate ammonia. When cellular nitrogen levels are high, the C-terminal adenylyl transferase (AT) inactivates GlnA by covalent transfer of an adenylyl group from ATP to specific tyrosine residue of GlnA, thus reducing its activity. Conversely, when nitrogen levels are low, the N-terminal adenylyl removase (AR) activates GlnA by removing the adenylyl group by phosphorolysis, increasing its activity. The regulatory region of GlnE binds the signal transduction protein PII (GlnB) which indicates the nitrogen status of the cell.</text>
</comment>
<comment type="catalytic activity">
    <reaction evidence="1">
        <text>[glutamine synthetase]-O(4)-(5'-adenylyl)-L-tyrosine + phosphate = [glutamine synthetase]-L-tyrosine + ADP</text>
        <dbReference type="Rhea" id="RHEA:43716"/>
        <dbReference type="Rhea" id="RHEA-COMP:10660"/>
        <dbReference type="Rhea" id="RHEA-COMP:10661"/>
        <dbReference type="ChEBI" id="CHEBI:43474"/>
        <dbReference type="ChEBI" id="CHEBI:46858"/>
        <dbReference type="ChEBI" id="CHEBI:83624"/>
        <dbReference type="ChEBI" id="CHEBI:456216"/>
        <dbReference type="EC" id="2.7.7.89"/>
    </reaction>
</comment>
<comment type="catalytic activity">
    <reaction evidence="1">
        <text>[glutamine synthetase]-L-tyrosine + ATP = [glutamine synthetase]-O(4)-(5'-adenylyl)-L-tyrosine + diphosphate</text>
        <dbReference type="Rhea" id="RHEA:18589"/>
        <dbReference type="Rhea" id="RHEA-COMP:10660"/>
        <dbReference type="Rhea" id="RHEA-COMP:10661"/>
        <dbReference type="ChEBI" id="CHEBI:30616"/>
        <dbReference type="ChEBI" id="CHEBI:33019"/>
        <dbReference type="ChEBI" id="CHEBI:46858"/>
        <dbReference type="ChEBI" id="CHEBI:83624"/>
        <dbReference type="EC" id="2.7.7.42"/>
    </reaction>
</comment>
<comment type="cofactor">
    <cofactor evidence="1">
        <name>Mg(2+)</name>
        <dbReference type="ChEBI" id="CHEBI:18420"/>
    </cofactor>
</comment>
<comment type="similarity">
    <text evidence="1">Belongs to the GlnE family.</text>
</comment>
<organism>
    <name type="scientific">Salmonella paratyphi A (strain ATCC 9150 / SARB42)</name>
    <dbReference type="NCBI Taxonomy" id="295319"/>
    <lineage>
        <taxon>Bacteria</taxon>
        <taxon>Pseudomonadati</taxon>
        <taxon>Pseudomonadota</taxon>
        <taxon>Gammaproteobacteria</taxon>
        <taxon>Enterobacterales</taxon>
        <taxon>Enterobacteriaceae</taxon>
        <taxon>Salmonella</taxon>
    </lineage>
</organism>
<name>GLNE_SALPA</name>
<gene>
    <name evidence="1" type="primary">glnE</name>
    <name type="ordered locus">SPA3069</name>
</gene>